<protein>
    <recommendedName>
        <fullName evidence="1">Glutamate racemase</fullName>
        <ecNumber evidence="1">5.1.1.3</ecNumber>
    </recommendedName>
</protein>
<reference key="1">
    <citation type="journal article" date="2005" name="J. Bacteriol.">
        <title>Insights on evolution of virulence and resistance from the complete genome analysis of an early methicillin-resistant Staphylococcus aureus strain and a biofilm-producing methicillin-resistant Staphylococcus epidermidis strain.</title>
        <authorList>
            <person name="Gill S.R."/>
            <person name="Fouts D.E."/>
            <person name="Archer G.L."/>
            <person name="Mongodin E.F."/>
            <person name="DeBoy R.T."/>
            <person name="Ravel J."/>
            <person name="Paulsen I.T."/>
            <person name="Kolonay J.F."/>
            <person name="Brinkac L.M."/>
            <person name="Beanan M.J."/>
            <person name="Dodson R.J."/>
            <person name="Daugherty S.C."/>
            <person name="Madupu R."/>
            <person name="Angiuoli S.V."/>
            <person name="Durkin A.S."/>
            <person name="Haft D.H."/>
            <person name="Vamathevan J.J."/>
            <person name="Khouri H."/>
            <person name="Utterback T.R."/>
            <person name="Lee C."/>
            <person name="Dimitrov G."/>
            <person name="Jiang L."/>
            <person name="Qin H."/>
            <person name="Weidman J."/>
            <person name="Tran K."/>
            <person name="Kang K.H."/>
            <person name="Hance I.R."/>
            <person name="Nelson K.E."/>
            <person name="Fraser C.M."/>
        </authorList>
    </citation>
    <scope>NUCLEOTIDE SEQUENCE [LARGE SCALE GENOMIC DNA]</scope>
    <source>
        <strain>COL</strain>
    </source>
</reference>
<keyword id="KW-0133">Cell shape</keyword>
<keyword id="KW-0961">Cell wall biogenesis/degradation</keyword>
<keyword id="KW-0413">Isomerase</keyword>
<keyword id="KW-0573">Peptidoglycan synthesis</keyword>
<name>MURI_STAAC</name>
<organism>
    <name type="scientific">Staphylococcus aureus (strain COL)</name>
    <dbReference type="NCBI Taxonomy" id="93062"/>
    <lineage>
        <taxon>Bacteria</taxon>
        <taxon>Bacillati</taxon>
        <taxon>Bacillota</taxon>
        <taxon>Bacilli</taxon>
        <taxon>Bacillales</taxon>
        <taxon>Staphylococcaceae</taxon>
        <taxon>Staphylococcus</taxon>
    </lineage>
</organism>
<sequence>MNKPIGVIDSGVGGLTVAKEIMRQLPNETIYYLGDIGRCPYGPRPGEQVKQYTVEIARKLMEFDIKMLVIACNTATAVALEYLQKTLSIPVIGVIEPGARTAIMTTRNQNVLVLGTEGTIKSEAYRTHIKRINPHVEVHGVACPGFVPLVEQMRYSDPTITSIVIHQTLKRWRNSESDTVILGCTHYPLLYKPIYDYFGGKKTVISSGLETAREVSALLTFSNEHASYTEHPDHRFFATGDPTHITNIIKEWLNLSVNVERISVND</sequence>
<proteinExistence type="inferred from homology"/>
<gene>
    <name evidence="1" type="primary">murI</name>
    <name type="ordered locus">SACOL1161</name>
</gene>
<comment type="function">
    <text evidence="1">Provides the (R)-glutamate required for cell wall biosynthesis.</text>
</comment>
<comment type="catalytic activity">
    <reaction evidence="1">
        <text>L-glutamate = D-glutamate</text>
        <dbReference type="Rhea" id="RHEA:12813"/>
        <dbReference type="ChEBI" id="CHEBI:29985"/>
        <dbReference type="ChEBI" id="CHEBI:29986"/>
        <dbReference type="EC" id="5.1.1.3"/>
    </reaction>
</comment>
<comment type="pathway">
    <text evidence="1">Cell wall biogenesis; peptidoglycan biosynthesis.</text>
</comment>
<comment type="similarity">
    <text evidence="1">Belongs to the aspartate/glutamate racemases family.</text>
</comment>
<dbReference type="EC" id="5.1.1.3" evidence="1"/>
<dbReference type="EMBL" id="CP000046">
    <property type="protein sequence ID" value="AAW36540.1"/>
    <property type="molecule type" value="Genomic_DNA"/>
</dbReference>
<dbReference type="SMR" id="Q5HGT3"/>
<dbReference type="KEGG" id="sac:SACOL1161"/>
<dbReference type="HOGENOM" id="CLU_052344_0_2_9"/>
<dbReference type="UniPathway" id="UPA00219"/>
<dbReference type="Proteomes" id="UP000000530">
    <property type="component" value="Chromosome"/>
</dbReference>
<dbReference type="GO" id="GO:0008881">
    <property type="term" value="F:glutamate racemase activity"/>
    <property type="evidence" value="ECO:0007669"/>
    <property type="project" value="UniProtKB-UniRule"/>
</dbReference>
<dbReference type="GO" id="GO:0071555">
    <property type="term" value="P:cell wall organization"/>
    <property type="evidence" value="ECO:0007669"/>
    <property type="project" value="UniProtKB-KW"/>
</dbReference>
<dbReference type="GO" id="GO:0009252">
    <property type="term" value="P:peptidoglycan biosynthetic process"/>
    <property type="evidence" value="ECO:0007669"/>
    <property type="project" value="UniProtKB-UniRule"/>
</dbReference>
<dbReference type="GO" id="GO:0008360">
    <property type="term" value="P:regulation of cell shape"/>
    <property type="evidence" value="ECO:0007669"/>
    <property type="project" value="UniProtKB-KW"/>
</dbReference>
<dbReference type="FunFam" id="3.40.50.1860:FF:000002">
    <property type="entry name" value="Glutamate racemase"/>
    <property type="match status" value="1"/>
</dbReference>
<dbReference type="Gene3D" id="3.40.50.1860">
    <property type="match status" value="2"/>
</dbReference>
<dbReference type="HAMAP" id="MF_00258">
    <property type="entry name" value="Glu_racemase"/>
    <property type="match status" value="1"/>
</dbReference>
<dbReference type="InterPro" id="IPR015942">
    <property type="entry name" value="Asp/Glu/hydantoin_racemase"/>
</dbReference>
<dbReference type="InterPro" id="IPR001920">
    <property type="entry name" value="Asp/Glu_race"/>
</dbReference>
<dbReference type="InterPro" id="IPR018187">
    <property type="entry name" value="Asp/Glu_racemase_AS_1"/>
</dbReference>
<dbReference type="InterPro" id="IPR033134">
    <property type="entry name" value="Asp/Glu_racemase_AS_2"/>
</dbReference>
<dbReference type="InterPro" id="IPR004391">
    <property type="entry name" value="Glu_race"/>
</dbReference>
<dbReference type="NCBIfam" id="TIGR00067">
    <property type="entry name" value="glut_race"/>
    <property type="match status" value="1"/>
</dbReference>
<dbReference type="NCBIfam" id="NF002035">
    <property type="entry name" value="PRK00865.1-3"/>
    <property type="match status" value="1"/>
</dbReference>
<dbReference type="PANTHER" id="PTHR21198">
    <property type="entry name" value="GLUTAMATE RACEMASE"/>
    <property type="match status" value="1"/>
</dbReference>
<dbReference type="PANTHER" id="PTHR21198:SF2">
    <property type="entry name" value="GLUTAMATE RACEMASE"/>
    <property type="match status" value="1"/>
</dbReference>
<dbReference type="Pfam" id="PF01177">
    <property type="entry name" value="Asp_Glu_race"/>
    <property type="match status" value="1"/>
</dbReference>
<dbReference type="SUPFAM" id="SSF53681">
    <property type="entry name" value="Aspartate/glutamate racemase"/>
    <property type="match status" value="2"/>
</dbReference>
<dbReference type="PROSITE" id="PS00923">
    <property type="entry name" value="ASP_GLU_RACEMASE_1"/>
    <property type="match status" value="1"/>
</dbReference>
<dbReference type="PROSITE" id="PS00924">
    <property type="entry name" value="ASP_GLU_RACEMASE_2"/>
    <property type="match status" value="1"/>
</dbReference>
<accession>Q5HGT3</accession>
<evidence type="ECO:0000255" key="1">
    <source>
        <dbReference type="HAMAP-Rule" id="MF_00258"/>
    </source>
</evidence>
<feature type="chain" id="PRO_0000095507" description="Glutamate racemase">
    <location>
        <begin position="1"/>
        <end position="266"/>
    </location>
</feature>
<feature type="active site" description="Proton donor/acceptor" evidence="1">
    <location>
        <position position="72"/>
    </location>
</feature>
<feature type="active site" description="Proton donor/acceptor" evidence="1">
    <location>
        <position position="184"/>
    </location>
</feature>
<feature type="binding site" evidence="1">
    <location>
        <begin position="9"/>
        <end position="10"/>
    </location>
    <ligand>
        <name>substrate</name>
    </ligand>
</feature>
<feature type="binding site" evidence="1">
    <location>
        <begin position="41"/>
        <end position="42"/>
    </location>
    <ligand>
        <name>substrate</name>
    </ligand>
</feature>
<feature type="binding site" evidence="1">
    <location>
        <begin position="73"/>
        <end position="74"/>
    </location>
    <ligand>
        <name>substrate</name>
    </ligand>
</feature>
<feature type="binding site" evidence="1">
    <location>
        <begin position="185"/>
        <end position="186"/>
    </location>
    <ligand>
        <name>substrate</name>
    </ligand>
</feature>